<evidence type="ECO:0000255" key="1">
    <source>
        <dbReference type="HAMAP-Rule" id="MF_00112"/>
    </source>
</evidence>
<reference key="1">
    <citation type="journal article" date="2002" name="Proc. Natl. Acad. Sci. U.S.A.">
        <title>Genome sequence of the hyperthermophilic crenarchaeon Pyrobaculum aerophilum.</title>
        <authorList>
            <person name="Fitz-Gibbon S.T."/>
            <person name="Ladner H."/>
            <person name="Kim U.-J."/>
            <person name="Stetter K.O."/>
            <person name="Simon M.I."/>
            <person name="Miller J.H."/>
        </authorList>
    </citation>
    <scope>NUCLEOTIDE SEQUENCE [LARGE SCALE GENOMIC DNA]</scope>
    <source>
        <strain>ATCC 51768 / DSM 7523 / JCM 9630 / CIP 104966 / NBRC 100827 / IM2</strain>
    </source>
</reference>
<comment type="function">
    <text evidence="1">Prenyltransferase that catalyzes the transfer of the geranylgeranyl moiety of geranylgeranyl diphosphate (GGPP) to the C3 hydroxyl of sn-glycerol-1-phosphate (G1P). This reaction is the first ether-bond-formation step in the biosynthesis of archaeal membrane lipids.</text>
</comment>
<comment type="catalytic activity">
    <reaction evidence="1">
        <text>sn-glycerol 1-phosphate + (2E,6E,10E)-geranylgeranyl diphosphate = sn-3-O-(geranylgeranyl)glycerol 1-phosphate + diphosphate</text>
        <dbReference type="Rhea" id="RHEA:23404"/>
        <dbReference type="ChEBI" id="CHEBI:33019"/>
        <dbReference type="ChEBI" id="CHEBI:57677"/>
        <dbReference type="ChEBI" id="CHEBI:57685"/>
        <dbReference type="ChEBI" id="CHEBI:58756"/>
        <dbReference type="EC" id="2.5.1.41"/>
    </reaction>
</comment>
<comment type="cofactor">
    <cofactor evidence="1">
        <name>Mg(2+)</name>
        <dbReference type="ChEBI" id="CHEBI:18420"/>
    </cofactor>
</comment>
<comment type="pathway">
    <text evidence="1">Membrane lipid metabolism; glycerophospholipid metabolism.</text>
</comment>
<comment type="subcellular location">
    <subcellularLocation>
        <location evidence="1">Cytoplasm</location>
    </subcellularLocation>
</comment>
<comment type="similarity">
    <text evidence="1">Belongs to the GGGP/HepGP synthase family. Group II subfamily.</text>
</comment>
<feature type="chain" id="PRO_0000138739" description="Geranylgeranylglyceryl phosphate synthase">
    <location>
        <begin position="1"/>
        <end position="239"/>
    </location>
</feature>
<feature type="binding site" evidence="1">
    <location>
        <position position="18"/>
    </location>
    <ligand>
        <name>Mg(2+)</name>
        <dbReference type="ChEBI" id="CHEBI:18420"/>
    </ligand>
</feature>
<feature type="binding site" evidence="1">
    <location>
        <position position="45"/>
    </location>
    <ligand>
        <name>Mg(2+)</name>
        <dbReference type="ChEBI" id="CHEBI:18420"/>
    </ligand>
</feature>
<feature type="binding site" evidence="1">
    <location>
        <begin position="166"/>
        <end position="172"/>
    </location>
    <ligand>
        <name>sn-glycerol 1-phosphate</name>
        <dbReference type="ChEBI" id="CHEBI:57685"/>
    </ligand>
</feature>
<feature type="binding site" evidence="1">
    <location>
        <begin position="197"/>
        <end position="198"/>
    </location>
    <ligand>
        <name>sn-glycerol 1-phosphate</name>
        <dbReference type="ChEBI" id="CHEBI:57685"/>
    </ligand>
</feature>
<feature type="binding site" evidence="1">
    <location>
        <begin position="219"/>
        <end position="220"/>
    </location>
    <ligand>
        <name>sn-glycerol 1-phosphate</name>
        <dbReference type="ChEBI" id="CHEBI:57685"/>
    </ligand>
</feature>
<accession>Q8ZTX5</accession>
<name>GGGPS_PYRAE</name>
<protein>
    <recommendedName>
        <fullName evidence="1">Geranylgeranylglyceryl phosphate synthase</fullName>
        <shortName evidence="1">GGGP synthase</shortName>
        <shortName evidence="1">GGGPS</shortName>
        <ecNumber evidence="1">2.5.1.41</ecNumber>
    </recommendedName>
    <alternativeName>
        <fullName evidence="1">(S)-3-O-geranylgeranylglyceryl phosphate synthase</fullName>
    </alternativeName>
    <alternativeName>
        <fullName evidence="1">Phosphoglycerol geranylgeranyltransferase</fullName>
    </alternativeName>
</protein>
<dbReference type="EC" id="2.5.1.41" evidence="1"/>
<dbReference type="EMBL" id="AE009441">
    <property type="protein sequence ID" value="AAL64634.1"/>
    <property type="molecule type" value="Genomic_DNA"/>
</dbReference>
<dbReference type="RefSeq" id="WP_011009102.1">
    <property type="nucleotide sequence ID" value="NC_003364.1"/>
</dbReference>
<dbReference type="SMR" id="Q8ZTX5"/>
<dbReference type="STRING" id="178306.PAE3045"/>
<dbReference type="EnsemblBacteria" id="AAL64634">
    <property type="protein sequence ID" value="AAL64634"/>
    <property type="gene ID" value="PAE3045"/>
</dbReference>
<dbReference type="GeneID" id="1463803"/>
<dbReference type="KEGG" id="pai:PAE3045"/>
<dbReference type="PATRIC" id="fig|178306.9.peg.2291"/>
<dbReference type="eggNOG" id="arCOG01085">
    <property type="taxonomic scope" value="Archaea"/>
</dbReference>
<dbReference type="HOGENOM" id="CLU_068610_0_0_2"/>
<dbReference type="InParanoid" id="Q8ZTX5"/>
<dbReference type="UniPathway" id="UPA00940"/>
<dbReference type="Proteomes" id="UP000002439">
    <property type="component" value="Chromosome"/>
</dbReference>
<dbReference type="GO" id="GO:0005737">
    <property type="term" value="C:cytoplasm"/>
    <property type="evidence" value="ECO:0007669"/>
    <property type="project" value="UniProtKB-SubCell"/>
</dbReference>
<dbReference type="GO" id="GO:0000107">
    <property type="term" value="F:imidazoleglycerol-phosphate synthase activity"/>
    <property type="evidence" value="ECO:0000318"/>
    <property type="project" value="GO_Central"/>
</dbReference>
<dbReference type="GO" id="GO:0000287">
    <property type="term" value="F:magnesium ion binding"/>
    <property type="evidence" value="ECO:0007669"/>
    <property type="project" value="UniProtKB-UniRule"/>
</dbReference>
<dbReference type="GO" id="GO:0047294">
    <property type="term" value="F:phosphoglycerol geranylgeranyltransferase activity"/>
    <property type="evidence" value="ECO:0007669"/>
    <property type="project" value="UniProtKB-UniRule"/>
</dbReference>
<dbReference type="GO" id="GO:0046474">
    <property type="term" value="P:glycerophospholipid biosynthetic process"/>
    <property type="evidence" value="ECO:0007669"/>
    <property type="project" value="UniProtKB-UniRule"/>
</dbReference>
<dbReference type="CDD" id="cd02812">
    <property type="entry name" value="PcrB_like"/>
    <property type="match status" value="1"/>
</dbReference>
<dbReference type="FunFam" id="3.20.20.390:FF:000001">
    <property type="entry name" value="Heptaprenylglyceryl phosphate synthase"/>
    <property type="match status" value="1"/>
</dbReference>
<dbReference type="Gene3D" id="3.20.20.390">
    <property type="entry name" value="FMN-linked oxidoreductases"/>
    <property type="match status" value="1"/>
</dbReference>
<dbReference type="HAMAP" id="MF_00112">
    <property type="entry name" value="GGGP_HepGP_synthase"/>
    <property type="match status" value="1"/>
</dbReference>
<dbReference type="InterPro" id="IPR039074">
    <property type="entry name" value="GGGP/HepGP_synthase_I"/>
</dbReference>
<dbReference type="InterPro" id="IPR038597">
    <property type="entry name" value="GGGP/HepGP_synthase_sf"/>
</dbReference>
<dbReference type="InterPro" id="IPR008205">
    <property type="entry name" value="GGGP_HepGP_synthase"/>
</dbReference>
<dbReference type="InterPro" id="IPR010946">
    <property type="entry name" value="GGGP_synth"/>
</dbReference>
<dbReference type="NCBIfam" id="TIGR01769">
    <property type="entry name" value="GGGP"/>
    <property type="match status" value="1"/>
</dbReference>
<dbReference type="NCBIfam" id="TIGR01768">
    <property type="entry name" value="GGGP-family"/>
    <property type="match status" value="1"/>
</dbReference>
<dbReference type="NCBIfam" id="NF003198">
    <property type="entry name" value="PRK04169.1-2"/>
    <property type="match status" value="1"/>
</dbReference>
<dbReference type="PANTHER" id="PTHR40029">
    <property type="match status" value="1"/>
</dbReference>
<dbReference type="PANTHER" id="PTHR40029:SF2">
    <property type="entry name" value="HEPTAPRENYLGLYCERYL PHOSPHATE SYNTHASE"/>
    <property type="match status" value="1"/>
</dbReference>
<dbReference type="Pfam" id="PF01884">
    <property type="entry name" value="PcrB"/>
    <property type="match status" value="1"/>
</dbReference>
<dbReference type="SUPFAM" id="SSF51395">
    <property type="entry name" value="FMN-linked oxidoreductases"/>
    <property type="match status" value="1"/>
</dbReference>
<organism>
    <name type="scientific">Pyrobaculum aerophilum (strain ATCC 51768 / DSM 7523 / JCM 9630 / CIP 104966 / NBRC 100827 / IM2)</name>
    <dbReference type="NCBI Taxonomy" id="178306"/>
    <lineage>
        <taxon>Archaea</taxon>
        <taxon>Thermoproteota</taxon>
        <taxon>Thermoprotei</taxon>
        <taxon>Thermoproteales</taxon>
        <taxon>Thermoproteaceae</taxon>
        <taxon>Pyrobaculum</taxon>
    </lineage>
</organism>
<keyword id="KW-0963">Cytoplasm</keyword>
<keyword id="KW-0444">Lipid biosynthesis</keyword>
<keyword id="KW-0443">Lipid metabolism</keyword>
<keyword id="KW-0460">Magnesium</keyword>
<keyword id="KW-0479">Metal-binding</keyword>
<keyword id="KW-0594">Phospholipid biosynthesis</keyword>
<keyword id="KW-1208">Phospholipid metabolism</keyword>
<keyword id="KW-1185">Reference proteome</keyword>
<keyword id="KW-0808">Transferase</keyword>
<gene>
    <name type="ordered locus">PAE3045</name>
</gene>
<proteinExistence type="inferred from homology"/>
<sequence length="239" mass="25509">MNLYEYLLEGVRHFTLIDPDKSVDYLKIAKYALEAGTDGILIGGSLGIRESQIAQVVKDIKNISNVPVVLFPGSLTQLTDLADGVLFLSVLNSLDPYFIIGAQIQGAVLIAKHYPRLEVISTAYIIVGDGGAAGFVSMSKPIPYTRPDIAAAYALAANYIGFKAVYLEAGSGASQPVPPEMVRAVRRAFPRVLIVGGGIKSGEIARAIARERPNVIVTGTLAEESPEKLGEIVRAIKQA</sequence>